<evidence type="ECO:0000250" key="1">
    <source>
        <dbReference type="UniProtKB" id="Q5KS41"/>
    </source>
</evidence>
<evidence type="ECO:0000250" key="2">
    <source>
        <dbReference type="UniProtKB" id="Q93ZR6"/>
    </source>
</evidence>
<evidence type="ECO:0000255" key="3"/>
<evidence type="ECO:0000255" key="4">
    <source>
        <dbReference type="PROSITE-ProRule" id="PRU00498"/>
    </source>
</evidence>
<evidence type="ECO:0000269" key="5">
    <source>
    </source>
</evidence>
<evidence type="ECO:0000269" key="6">
    <source>
    </source>
</evidence>
<evidence type="ECO:0000303" key="7">
    <source>
    </source>
</evidence>
<evidence type="ECO:0000305" key="8"/>
<evidence type="ECO:0000312" key="9">
    <source>
        <dbReference type="Araport" id="AT5G12420"/>
    </source>
</evidence>
<evidence type="ECO:0000312" key="10">
    <source>
        <dbReference type="EMBL" id="CAC42903.1"/>
    </source>
</evidence>
<gene>
    <name evidence="7" type="primary">WSD7</name>
    <name evidence="9" type="ordered locus">At5g12420</name>
    <name evidence="10" type="ORF">T2L20</name>
</gene>
<sequence>MTYGEEEPVSPMARVFQSPGIDLCAVTIMGFKTKINPDVVLDALKQNVSKHPRFSSILSDNGAKWIETEVNVEDHVIVPYIDAEEIGEGGQSFIDDYMSRLTMIPLDRSRPLWDIHILNVKTSEAEAVGFIRSHHSLGDGMSLISLMLACTHKTSDPDMFSNAIPSMKRRATMSHSLKTKGWFLRSIFTIGSTMRLLWNTTIDMLLLLATVLFLKDTKTPLKAGADVRSNPKRFYHRIISLDDIKLIKNAMNMTINDVLFGITQASLSHYLNRQYGTKKEEDGALTSYRNNLPDGIRFRVACTVNLRSDIGFKPLADMMVKDSKCRWGNYFSFIFLPFTIGLQTDPLVYLKMSKSMMARKKHSYHAALVYFIIKIVLKVFGAKAAAELFDRPVRNTTTCVSNVIGPMEEISFRGHPVSYIAPSSYGHSHALLIHLMSYADKMIISLAYDPTVISDPHKICDDMEESLKAMKASLCERGLL</sequence>
<dbReference type="EC" id="2.3.1.20" evidence="2"/>
<dbReference type="EC" id="2.3.1.75" evidence="6"/>
<dbReference type="EMBL" id="AL592312">
    <property type="protein sequence ID" value="CAC42903.1"/>
    <property type="molecule type" value="Genomic_DNA"/>
</dbReference>
<dbReference type="EMBL" id="CP002688">
    <property type="protein sequence ID" value="AED91807.1"/>
    <property type="molecule type" value="Genomic_DNA"/>
</dbReference>
<dbReference type="EMBL" id="AK117487">
    <property type="protein sequence ID" value="BAC42150.1"/>
    <property type="molecule type" value="mRNA"/>
</dbReference>
<dbReference type="EMBL" id="AY080798">
    <property type="protein sequence ID" value="AAL87279.1"/>
    <property type="molecule type" value="mRNA"/>
</dbReference>
<dbReference type="EMBL" id="AY114076">
    <property type="protein sequence ID" value="AAM45124.1"/>
    <property type="molecule type" value="mRNA"/>
</dbReference>
<dbReference type="EMBL" id="AK221764">
    <property type="protein sequence ID" value="BAD93847.1"/>
    <property type="status" value="ALT_INIT"/>
    <property type="molecule type" value="mRNA"/>
</dbReference>
<dbReference type="RefSeq" id="NP_568275.1">
    <property type="nucleotide sequence ID" value="NM_121280.4"/>
</dbReference>
<dbReference type="SMR" id="Q94CK0"/>
<dbReference type="IntAct" id="Q94CK0">
    <property type="interactions" value="5"/>
</dbReference>
<dbReference type="STRING" id="3702.Q94CK0"/>
<dbReference type="GlyCosmos" id="Q94CK0">
    <property type="glycosylation" value="2 sites, No reported glycans"/>
</dbReference>
<dbReference type="GlyGen" id="Q94CK0">
    <property type="glycosylation" value="2 sites"/>
</dbReference>
<dbReference type="iPTMnet" id="Q94CK0"/>
<dbReference type="PaxDb" id="3702-AT5G12420.1"/>
<dbReference type="ProteomicsDB" id="183463"/>
<dbReference type="EnsemblPlants" id="AT5G12420.1">
    <property type="protein sequence ID" value="AT5G12420.1"/>
    <property type="gene ID" value="AT5G12420"/>
</dbReference>
<dbReference type="GeneID" id="831117"/>
<dbReference type="Gramene" id="AT5G12420.1">
    <property type="protein sequence ID" value="AT5G12420.1"/>
    <property type="gene ID" value="AT5G12420"/>
</dbReference>
<dbReference type="KEGG" id="ath:AT5G12420"/>
<dbReference type="Araport" id="AT5G12420"/>
<dbReference type="TAIR" id="AT5G12420">
    <property type="gene designation" value="WSD7"/>
</dbReference>
<dbReference type="eggNOG" id="ENOG502QU8B">
    <property type="taxonomic scope" value="Eukaryota"/>
</dbReference>
<dbReference type="HOGENOM" id="CLU_027831_0_0_1"/>
<dbReference type="InParanoid" id="Q94CK0"/>
<dbReference type="OMA" id="RNPTRFY"/>
<dbReference type="OrthoDB" id="619536at2759"/>
<dbReference type="PhylomeDB" id="Q94CK0"/>
<dbReference type="UniPathway" id="UPA00282"/>
<dbReference type="PRO" id="PR:Q94CK0"/>
<dbReference type="Proteomes" id="UP000006548">
    <property type="component" value="Chromosome 5"/>
</dbReference>
<dbReference type="ExpressionAtlas" id="Q94CK0">
    <property type="expression patterns" value="baseline and differential"/>
</dbReference>
<dbReference type="GO" id="GO:0005783">
    <property type="term" value="C:endoplasmic reticulum"/>
    <property type="evidence" value="ECO:0000314"/>
    <property type="project" value="TAIR"/>
</dbReference>
<dbReference type="GO" id="GO:0005789">
    <property type="term" value="C:endoplasmic reticulum membrane"/>
    <property type="evidence" value="ECO:0007669"/>
    <property type="project" value="UniProtKB-SubCell"/>
</dbReference>
<dbReference type="GO" id="GO:0005794">
    <property type="term" value="C:Golgi apparatus"/>
    <property type="evidence" value="ECO:0000314"/>
    <property type="project" value="TAIR"/>
</dbReference>
<dbReference type="GO" id="GO:0000139">
    <property type="term" value="C:Golgi membrane"/>
    <property type="evidence" value="ECO:0007669"/>
    <property type="project" value="UniProtKB-SubCell"/>
</dbReference>
<dbReference type="GO" id="GO:0005886">
    <property type="term" value="C:plasma membrane"/>
    <property type="evidence" value="ECO:0007669"/>
    <property type="project" value="UniProtKB-SubCell"/>
</dbReference>
<dbReference type="GO" id="GO:0004144">
    <property type="term" value="F:diacylglycerol O-acyltransferase activity"/>
    <property type="evidence" value="ECO:0007669"/>
    <property type="project" value="UniProtKB-EC"/>
</dbReference>
<dbReference type="GO" id="GO:0047196">
    <property type="term" value="F:long-chain-alcohol O-fatty-acyltransferase activity"/>
    <property type="evidence" value="ECO:0000314"/>
    <property type="project" value="TAIR"/>
</dbReference>
<dbReference type="GO" id="GO:0009737">
    <property type="term" value="P:response to abscisic acid"/>
    <property type="evidence" value="ECO:0000270"/>
    <property type="project" value="UniProtKB"/>
</dbReference>
<dbReference type="GO" id="GO:0009651">
    <property type="term" value="P:response to salt stress"/>
    <property type="evidence" value="ECO:0000270"/>
    <property type="project" value="UniProtKB"/>
</dbReference>
<dbReference type="GO" id="GO:0009414">
    <property type="term" value="P:response to water deprivation"/>
    <property type="evidence" value="ECO:0000270"/>
    <property type="project" value="UniProtKB"/>
</dbReference>
<dbReference type="GO" id="GO:0019432">
    <property type="term" value="P:triglyceride biosynthetic process"/>
    <property type="evidence" value="ECO:0007669"/>
    <property type="project" value="UniProtKB-UniPathway"/>
</dbReference>
<dbReference type="GO" id="GO:0010025">
    <property type="term" value="P:wax biosynthetic process"/>
    <property type="evidence" value="ECO:0000314"/>
    <property type="project" value="TAIR"/>
</dbReference>
<dbReference type="Gene3D" id="3.30.559.10">
    <property type="entry name" value="Chloramphenicol acetyltransferase-like domain"/>
    <property type="match status" value="1"/>
</dbReference>
<dbReference type="InterPro" id="IPR023213">
    <property type="entry name" value="CAT-like_dom_sf"/>
</dbReference>
<dbReference type="InterPro" id="IPR045034">
    <property type="entry name" value="O-acyltransferase_WSD1-like"/>
</dbReference>
<dbReference type="InterPro" id="IPR009721">
    <property type="entry name" value="O-acyltransferase_WSD1_C"/>
</dbReference>
<dbReference type="InterPro" id="IPR004255">
    <property type="entry name" value="O-acyltransferase_WSD1_N"/>
</dbReference>
<dbReference type="PANTHER" id="PTHR31650">
    <property type="entry name" value="O-ACYLTRANSFERASE (WSD1-LIKE) FAMILY PROTEIN"/>
    <property type="match status" value="1"/>
</dbReference>
<dbReference type="PANTHER" id="PTHR31650:SF44">
    <property type="entry name" value="WAX ESTER SYNTHASE_DIACYLGLYCEROL ACYLTRANSFERASE 10-RELATED"/>
    <property type="match status" value="1"/>
</dbReference>
<dbReference type="Pfam" id="PF06974">
    <property type="entry name" value="WS_DGAT_C"/>
    <property type="match status" value="1"/>
</dbReference>
<dbReference type="Pfam" id="PF03007">
    <property type="entry name" value="WS_DGAT_cat"/>
    <property type="match status" value="1"/>
</dbReference>
<dbReference type="SUPFAM" id="SSF52777">
    <property type="entry name" value="CoA-dependent acyltransferases"/>
    <property type="match status" value="1"/>
</dbReference>
<keyword id="KW-0012">Acyltransferase</keyword>
<keyword id="KW-1003">Cell membrane</keyword>
<keyword id="KW-0256">Endoplasmic reticulum</keyword>
<keyword id="KW-0325">Glycoprotein</keyword>
<keyword id="KW-0333">Golgi apparatus</keyword>
<keyword id="KW-0472">Membrane</keyword>
<keyword id="KW-1185">Reference proteome</keyword>
<keyword id="KW-0346">Stress response</keyword>
<keyword id="KW-0808">Transferase</keyword>
<keyword id="KW-0812">Transmembrane</keyword>
<keyword id="KW-1133">Transmembrane helix</keyword>
<accession>Q94CK0</accession>
<accession>Q56XB1</accession>
<reference key="1">
    <citation type="journal article" date="2000" name="Nature">
        <title>Sequence and analysis of chromosome 5 of the plant Arabidopsis thaliana.</title>
        <authorList>
            <person name="Tabata S."/>
            <person name="Kaneko T."/>
            <person name="Nakamura Y."/>
            <person name="Kotani H."/>
            <person name="Kato T."/>
            <person name="Asamizu E."/>
            <person name="Miyajima N."/>
            <person name="Sasamoto S."/>
            <person name="Kimura T."/>
            <person name="Hosouchi T."/>
            <person name="Kawashima K."/>
            <person name="Kohara M."/>
            <person name="Matsumoto M."/>
            <person name="Matsuno A."/>
            <person name="Muraki A."/>
            <person name="Nakayama S."/>
            <person name="Nakazaki N."/>
            <person name="Naruo K."/>
            <person name="Okumura S."/>
            <person name="Shinpo S."/>
            <person name="Takeuchi C."/>
            <person name="Wada T."/>
            <person name="Watanabe A."/>
            <person name="Yamada M."/>
            <person name="Yasuda M."/>
            <person name="Sato S."/>
            <person name="de la Bastide M."/>
            <person name="Huang E."/>
            <person name="Spiegel L."/>
            <person name="Gnoj L."/>
            <person name="O'Shaughnessy A."/>
            <person name="Preston R."/>
            <person name="Habermann K."/>
            <person name="Murray J."/>
            <person name="Johnson D."/>
            <person name="Rohlfing T."/>
            <person name="Nelson J."/>
            <person name="Stoneking T."/>
            <person name="Pepin K."/>
            <person name="Spieth J."/>
            <person name="Sekhon M."/>
            <person name="Armstrong J."/>
            <person name="Becker M."/>
            <person name="Belter E."/>
            <person name="Cordum H."/>
            <person name="Cordes M."/>
            <person name="Courtney L."/>
            <person name="Courtney W."/>
            <person name="Dante M."/>
            <person name="Du H."/>
            <person name="Edwards J."/>
            <person name="Fryman J."/>
            <person name="Haakensen B."/>
            <person name="Lamar E."/>
            <person name="Latreille P."/>
            <person name="Leonard S."/>
            <person name="Meyer R."/>
            <person name="Mulvaney E."/>
            <person name="Ozersky P."/>
            <person name="Riley A."/>
            <person name="Strowmatt C."/>
            <person name="Wagner-McPherson C."/>
            <person name="Wollam A."/>
            <person name="Yoakum M."/>
            <person name="Bell M."/>
            <person name="Dedhia N."/>
            <person name="Parnell L."/>
            <person name="Shah R."/>
            <person name="Rodriguez M."/>
            <person name="Hoon See L."/>
            <person name="Vil D."/>
            <person name="Baker J."/>
            <person name="Kirchoff K."/>
            <person name="Toth K."/>
            <person name="King L."/>
            <person name="Bahret A."/>
            <person name="Miller B."/>
            <person name="Marra M.A."/>
            <person name="Martienssen R."/>
            <person name="McCombie W.R."/>
            <person name="Wilson R.K."/>
            <person name="Murphy G."/>
            <person name="Bancroft I."/>
            <person name="Volckaert G."/>
            <person name="Wambutt R."/>
            <person name="Duesterhoeft A."/>
            <person name="Stiekema W."/>
            <person name="Pohl T."/>
            <person name="Entian K.-D."/>
            <person name="Terryn N."/>
            <person name="Hartley N."/>
            <person name="Bent E."/>
            <person name="Johnson S."/>
            <person name="Langham S.-A."/>
            <person name="McCullagh B."/>
            <person name="Robben J."/>
            <person name="Grymonprez B."/>
            <person name="Zimmermann W."/>
            <person name="Ramsperger U."/>
            <person name="Wedler H."/>
            <person name="Balke K."/>
            <person name="Wedler E."/>
            <person name="Peters S."/>
            <person name="van Staveren M."/>
            <person name="Dirkse W."/>
            <person name="Mooijman P."/>
            <person name="Klein Lankhorst R."/>
            <person name="Weitzenegger T."/>
            <person name="Bothe G."/>
            <person name="Rose M."/>
            <person name="Hauf J."/>
            <person name="Berneiser S."/>
            <person name="Hempel S."/>
            <person name="Feldpausch M."/>
            <person name="Lamberth S."/>
            <person name="Villarroel R."/>
            <person name="Gielen J."/>
            <person name="Ardiles W."/>
            <person name="Bents O."/>
            <person name="Lemcke K."/>
            <person name="Kolesov G."/>
            <person name="Mayer K.F.X."/>
            <person name="Rudd S."/>
            <person name="Schoof H."/>
            <person name="Schueller C."/>
            <person name="Zaccaria P."/>
            <person name="Mewes H.-W."/>
            <person name="Bevan M."/>
            <person name="Fransz P.F."/>
        </authorList>
    </citation>
    <scope>NUCLEOTIDE SEQUENCE [LARGE SCALE GENOMIC DNA]</scope>
    <source>
        <strain>cv. Columbia</strain>
    </source>
</reference>
<reference key="2">
    <citation type="journal article" date="2017" name="Plant J.">
        <title>Araport11: a complete reannotation of the Arabidopsis thaliana reference genome.</title>
        <authorList>
            <person name="Cheng C.Y."/>
            <person name="Krishnakumar V."/>
            <person name="Chan A.P."/>
            <person name="Thibaud-Nissen F."/>
            <person name="Schobel S."/>
            <person name="Town C.D."/>
        </authorList>
    </citation>
    <scope>GENOME REANNOTATION</scope>
    <source>
        <strain>cv. Columbia</strain>
    </source>
</reference>
<reference key="3">
    <citation type="journal article" date="2002" name="Science">
        <title>Functional annotation of a full-length Arabidopsis cDNA collection.</title>
        <authorList>
            <person name="Seki M."/>
            <person name="Narusaka M."/>
            <person name="Kamiya A."/>
            <person name="Ishida J."/>
            <person name="Satou M."/>
            <person name="Sakurai T."/>
            <person name="Nakajima M."/>
            <person name="Enju A."/>
            <person name="Akiyama K."/>
            <person name="Oono Y."/>
            <person name="Muramatsu M."/>
            <person name="Hayashizaki Y."/>
            <person name="Kawai J."/>
            <person name="Carninci P."/>
            <person name="Itoh M."/>
            <person name="Ishii Y."/>
            <person name="Arakawa T."/>
            <person name="Shibata K."/>
            <person name="Shinagawa A."/>
            <person name="Shinozaki K."/>
        </authorList>
    </citation>
    <scope>NUCLEOTIDE SEQUENCE [LARGE SCALE MRNA]</scope>
    <source>
        <strain>cv. Columbia</strain>
    </source>
</reference>
<reference key="4">
    <citation type="journal article" date="2003" name="Science">
        <title>Empirical analysis of transcriptional activity in the Arabidopsis genome.</title>
        <authorList>
            <person name="Yamada K."/>
            <person name="Lim J."/>
            <person name="Dale J.M."/>
            <person name="Chen H."/>
            <person name="Shinn P."/>
            <person name="Palm C.J."/>
            <person name="Southwick A.M."/>
            <person name="Wu H.C."/>
            <person name="Kim C.J."/>
            <person name="Nguyen M."/>
            <person name="Pham P.K."/>
            <person name="Cheuk R.F."/>
            <person name="Karlin-Newmann G."/>
            <person name="Liu S.X."/>
            <person name="Lam B."/>
            <person name="Sakano H."/>
            <person name="Wu T."/>
            <person name="Yu G."/>
            <person name="Miranda M."/>
            <person name="Quach H.L."/>
            <person name="Tripp M."/>
            <person name="Chang C.H."/>
            <person name="Lee J.M."/>
            <person name="Toriumi M.J."/>
            <person name="Chan M.M."/>
            <person name="Tang C.C."/>
            <person name="Onodera C.S."/>
            <person name="Deng J.M."/>
            <person name="Akiyama K."/>
            <person name="Ansari Y."/>
            <person name="Arakawa T."/>
            <person name="Banh J."/>
            <person name="Banno F."/>
            <person name="Bowser L."/>
            <person name="Brooks S.Y."/>
            <person name="Carninci P."/>
            <person name="Chao Q."/>
            <person name="Choy N."/>
            <person name="Enju A."/>
            <person name="Goldsmith A.D."/>
            <person name="Gurjal M."/>
            <person name="Hansen N.F."/>
            <person name="Hayashizaki Y."/>
            <person name="Johnson-Hopson C."/>
            <person name="Hsuan V.W."/>
            <person name="Iida K."/>
            <person name="Karnes M."/>
            <person name="Khan S."/>
            <person name="Koesema E."/>
            <person name="Ishida J."/>
            <person name="Jiang P.X."/>
            <person name="Jones T."/>
            <person name="Kawai J."/>
            <person name="Kamiya A."/>
            <person name="Meyers C."/>
            <person name="Nakajima M."/>
            <person name="Narusaka M."/>
            <person name="Seki M."/>
            <person name="Sakurai T."/>
            <person name="Satou M."/>
            <person name="Tamse R."/>
            <person name="Vaysberg M."/>
            <person name="Wallender E.K."/>
            <person name="Wong C."/>
            <person name="Yamamura Y."/>
            <person name="Yuan S."/>
            <person name="Shinozaki K."/>
            <person name="Davis R.W."/>
            <person name="Theologis A."/>
            <person name="Ecker J.R."/>
        </authorList>
    </citation>
    <scope>NUCLEOTIDE SEQUENCE [LARGE SCALE MRNA]</scope>
    <source>
        <strain>cv. Columbia</strain>
    </source>
</reference>
<reference key="5">
    <citation type="submission" date="2005-03" db="EMBL/GenBank/DDBJ databases">
        <title>Large-scale analysis of RIKEN Arabidopsis full-length (RAFL) cDNAs.</title>
        <authorList>
            <person name="Totoki Y."/>
            <person name="Seki M."/>
            <person name="Ishida J."/>
            <person name="Nakajima M."/>
            <person name="Enju A."/>
            <person name="Kamiya A."/>
            <person name="Narusaka M."/>
            <person name="Shin-i T."/>
            <person name="Nakagawa M."/>
            <person name="Sakamoto N."/>
            <person name="Oishi K."/>
            <person name="Kohara Y."/>
            <person name="Kobayashi M."/>
            <person name="Toyoda A."/>
            <person name="Sakaki Y."/>
            <person name="Sakurai T."/>
            <person name="Iida K."/>
            <person name="Akiyama K."/>
            <person name="Satou M."/>
            <person name="Toyoda T."/>
            <person name="Konagaya A."/>
            <person name="Carninci P."/>
            <person name="Kawai J."/>
            <person name="Hayashizaki Y."/>
            <person name="Shinozaki K."/>
        </authorList>
    </citation>
    <scope>NUCLEOTIDE SEQUENCE [LARGE SCALE MRNA] OF 308-480</scope>
    <source>
        <strain>cv. Columbia</strain>
    </source>
</reference>
<reference key="6">
    <citation type="journal article" date="2003" name="J. Biol. Chem.">
        <title>A novel bifunctional wax ester synthase/acyl-CoA:diacylglycerol acyltransferase mediates wax ester and triacylglycerol biosynthesis in Acinetobacter calcoaceticus ADP1.</title>
        <authorList>
            <person name="Kalscheuer R."/>
            <person name="Steinbuchel A."/>
        </authorList>
    </citation>
    <scope>GENE FAMILY</scope>
</reference>
<reference key="7">
    <citation type="journal article" date="2005" name="Plant Physiol.">
        <title>Cuticular lipid composition, surface structure, and gene expression in Arabidopsis stem epidermis.</title>
        <authorList>
            <person name="Suh M.C."/>
            <person name="Samuels A.L."/>
            <person name="Jetter R."/>
            <person name="Kunst L."/>
            <person name="Pollard M."/>
            <person name="Ohlrogge J."/>
            <person name="Beisson F."/>
        </authorList>
    </citation>
    <scope>INDUCTION</scope>
</reference>
<reference key="8">
    <citation type="journal article" date="2008" name="Plant Physiol.">
        <title>Identification of the wax ester synthase/acyl-coenzyme A: diacylglycerol acyltransferase WSD1 required for stem wax ester biosynthesis in Arabidopsis.</title>
        <authorList>
            <person name="Li F."/>
            <person name="Wu X."/>
            <person name="Lam P."/>
            <person name="Bird D."/>
            <person name="Zheng H."/>
            <person name="Samuels A.L."/>
            <person name="Jetter R."/>
            <person name="Kunst L."/>
        </authorList>
    </citation>
    <scope>GENE FAMILY</scope>
    <scope>NOMENCLATURE</scope>
</reference>
<reference key="9">
    <citation type="journal article" date="2013" name="Arabidopsis Book">
        <title>Acyl-lipid metabolism.</title>
        <authorList>
            <person name="Li-Beisson Y."/>
            <person name="Shorrosh B."/>
            <person name="Beisson F."/>
            <person name="Andersson M.X."/>
            <person name="Arondel V."/>
            <person name="Bates P.D."/>
            <person name="Baud S."/>
            <person name="Bird D."/>
            <person name="Debono A."/>
            <person name="Durrett T.P."/>
            <person name="Franke R.B."/>
            <person name="Graham I.A."/>
            <person name="Katayama K."/>
            <person name="Kelly A.A."/>
            <person name="Larson T."/>
            <person name="Markham J.E."/>
            <person name="Miquel M."/>
            <person name="Molina I."/>
            <person name="Nishida I."/>
            <person name="Rowland O."/>
            <person name="Samuels L."/>
            <person name="Schmid K.M."/>
            <person name="Wada H."/>
            <person name="Welti R."/>
            <person name="Xu C."/>
            <person name="Zallot R."/>
            <person name="Ohlrogge J."/>
        </authorList>
    </citation>
    <scope>REVIEW ON ACYL-LIPID METABOLISM</scope>
</reference>
<reference key="10">
    <citation type="journal article" date="2019" name="Plant J.">
        <title>Surface wax esters contribute to drought tolerance in Arabidopsis.</title>
        <authorList>
            <person name="Patwari P."/>
            <person name="Salewski V."/>
            <person name="Gutbrod K."/>
            <person name="Kreszies T."/>
            <person name="Dresen-Scholz B."/>
            <person name="Peisker H."/>
            <person name="Steiner U."/>
            <person name="Meyer A.J."/>
            <person name="Schreiber L."/>
            <person name="Doermann P."/>
        </authorList>
    </citation>
    <scope>FUNCTION</scope>
    <scope>DISRUPTION PHENOTYPE</scope>
    <scope>CATALYTIC ACTIVITY</scope>
    <scope>INDUCTION BY DROUGHT; SALT AND ABSCISIC ACID</scope>
    <scope>SUBCELLULAR LOCATION</scope>
    <scope>TISSUE SPECIFICITY</scope>
    <source>
        <strain>cv. Columbia</strain>
    </source>
</reference>
<name>WSD7_ARATH</name>
<protein>
    <recommendedName>
        <fullName evidence="7">Wax ester synthase/diacylglycerol acyltransferase 7</fullName>
        <shortName evidence="7">WS/DGAT 7</shortName>
    </recommendedName>
    <alternativeName>
        <fullName evidence="7">Diacylglycerol O-acyltransferase WSD7</fullName>
        <ecNumber evidence="2">2.3.1.20</ecNumber>
    </alternativeName>
    <alternativeName>
        <fullName evidence="7">Long-chain-alcohol O-fatty-acyltransferase WSD7</fullName>
        <ecNumber evidence="6">2.3.1.75</ecNumber>
    </alternativeName>
</protein>
<organism>
    <name type="scientific">Arabidopsis thaliana</name>
    <name type="common">Mouse-ear cress</name>
    <dbReference type="NCBI Taxonomy" id="3702"/>
    <lineage>
        <taxon>Eukaryota</taxon>
        <taxon>Viridiplantae</taxon>
        <taxon>Streptophyta</taxon>
        <taxon>Embryophyta</taxon>
        <taxon>Tracheophyta</taxon>
        <taxon>Spermatophyta</taxon>
        <taxon>Magnoliopsida</taxon>
        <taxon>eudicotyledons</taxon>
        <taxon>Gunneridae</taxon>
        <taxon>Pentapetalae</taxon>
        <taxon>rosids</taxon>
        <taxon>malvids</taxon>
        <taxon>Brassicales</taxon>
        <taxon>Brassicaceae</taxon>
        <taxon>Camelineae</taxon>
        <taxon>Arabidopsis</taxon>
    </lineage>
</organism>
<comment type="function">
    <text evidence="2 6">Bifunctional wax ester synthase/diacylglycerol acyltransferase that uses acyl-CoAs with 14, 16 and 18 carbons as substrates, preferably in combination with 16:0ol alcohol (PubMed:30729606). Involved in cuticular wax biosynthesis (By similarity).</text>
</comment>
<comment type="catalytic activity">
    <reaction evidence="2">
        <text>an acyl-CoA + a 1,2-diacyl-sn-glycerol = a triacyl-sn-glycerol + CoA</text>
        <dbReference type="Rhea" id="RHEA:10868"/>
        <dbReference type="ChEBI" id="CHEBI:17815"/>
        <dbReference type="ChEBI" id="CHEBI:57287"/>
        <dbReference type="ChEBI" id="CHEBI:58342"/>
        <dbReference type="ChEBI" id="CHEBI:64615"/>
        <dbReference type="EC" id="2.3.1.20"/>
    </reaction>
</comment>
<comment type="catalytic activity">
    <reaction evidence="6">
        <text>a long chain fatty alcohol + a fatty acyl-CoA = a wax ester + CoA</text>
        <dbReference type="Rhea" id="RHEA:38443"/>
        <dbReference type="ChEBI" id="CHEBI:10036"/>
        <dbReference type="ChEBI" id="CHEBI:17135"/>
        <dbReference type="ChEBI" id="CHEBI:57287"/>
        <dbReference type="ChEBI" id="CHEBI:77636"/>
        <dbReference type="EC" id="2.3.1.75"/>
    </reaction>
</comment>
<comment type="pathway">
    <text evidence="2">Glycerolipid metabolism; triacylglycerol biosynthesis.</text>
</comment>
<comment type="pathway">
    <text evidence="2">Lipid metabolism.</text>
</comment>
<comment type="subcellular location">
    <subcellularLocation>
        <location evidence="1">Cell membrane</location>
        <topology evidence="3">Single-pass membrane protein</topology>
    </subcellularLocation>
    <subcellularLocation>
        <location evidence="6">Endoplasmic reticulum membrane</location>
        <topology evidence="3">Multi-pass membrane protein</topology>
    </subcellularLocation>
    <subcellularLocation>
        <location evidence="6">Golgi apparatus membrane</location>
        <topology evidence="3">Multi-pass membrane protein</topology>
    </subcellularLocation>
</comment>
<comment type="tissue specificity">
    <text evidence="6">Expressed in roots, stems, leaves, flowers and siliques.</text>
</comment>
<comment type="induction">
    <text evidence="5 6">Induced in roots and leaves during drought and salt stresses, and upon abscisic acid (ABA) treatment (PubMed:30729606). Up-regulated in the stem epidermis during active wax synthesis (PubMed:16299169).</text>
</comment>
<comment type="disruption phenotype">
    <text evidence="6">Normal wax ester loads on leaves.</text>
</comment>
<comment type="similarity">
    <text evidence="8">In the N-terminal section; belongs to the long-chain O-acyltransferase family.</text>
</comment>
<comment type="sequence caution" evidence="8">
    <conflict type="erroneous initiation">
        <sequence resource="EMBL-CDS" id="BAD93847"/>
    </conflict>
    <text>Truncated N-terminus.</text>
</comment>
<proteinExistence type="evidence at protein level"/>
<feature type="chain" id="PRO_0000452617" description="Wax ester synthase/diacylglycerol acyltransferase 7">
    <location>
        <begin position="1"/>
        <end position="480"/>
    </location>
</feature>
<feature type="topological domain" description="Cytoplasmic" evidence="8">
    <location>
        <begin position="1"/>
        <end position="193"/>
    </location>
</feature>
<feature type="transmembrane region" description="Helical" evidence="3">
    <location>
        <begin position="194"/>
        <end position="214"/>
    </location>
</feature>
<feature type="topological domain" description="Lumenal" evidence="8">
    <location>
        <begin position="215"/>
        <end position="329"/>
    </location>
</feature>
<feature type="transmembrane region" description="Helical" evidence="3">
    <location>
        <begin position="330"/>
        <end position="350"/>
    </location>
</feature>
<feature type="topological domain" description="Cytoplasmic" evidence="8">
    <location>
        <begin position="351"/>
        <end position="365"/>
    </location>
</feature>
<feature type="transmembrane region" description="Helical" evidence="3">
    <location>
        <begin position="366"/>
        <end position="386"/>
    </location>
</feature>
<feature type="topological domain" description="Lumenal" evidence="8">
    <location>
        <begin position="387"/>
        <end position="480"/>
    </location>
</feature>
<feature type="active site" description="Proton acceptor" evidence="3">
    <location>
        <position position="135"/>
    </location>
</feature>
<feature type="glycosylation site" description="N-linked (GlcNAc...) asparagine" evidence="4">
    <location>
        <position position="252"/>
    </location>
</feature>
<feature type="glycosylation site" description="N-linked (GlcNAc...) asparagine" evidence="4">
    <location>
        <position position="395"/>
    </location>
</feature>